<name>RSXD_SHIBS</name>
<organism>
    <name type="scientific">Shigella boydii serotype 4 (strain Sb227)</name>
    <dbReference type="NCBI Taxonomy" id="300268"/>
    <lineage>
        <taxon>Bacteria</taxon>
        <taxon>Pseudomonadati</taxon>
        <taxon>Pseudomonadota</taxon>
        <taxon>Gammaproteobacteria</taxon>
        <taxon>Enterobacterales</taxon>
        <taxon>Enterobacteriaceae</taxon>
        <taxon>Shigella</taxon>
    </lineage>
</organism>
<proteinExistence type="inferred from homology"/>
<reference key="1">
    <citation type="journal article" date="2005" name="Nucleic Acids Res.">
        <title>Genome dynamics and diversity of Shigella species, the etiologic agents of bacillary dysentery.</title>
        <authorList>
            <person name="Yang F."/>
            <person name="Yang J."/>
            <person name="Zhang X."/>
            <person name="Chen L."/>
            <person name="Jiang Y."/>
            <person name="Yan Y."/>
            <person name="Tang X."/>
            <person name="Wang J."/>
            <person name="Xiong Z."/>
            <person name="Dong J."/>
            <person name="Xue Y."/>
            <person name="Zhu Y."/>
            <person name="Xu X."/>
            <person name="Sun L."/>
            <person name="Chen S."/>
            <person name="Nie H."/>
            <person name="Peng J."/>
            <person name="Xu J."/>
            <person name="Wang Y."/>
            <person name="Yuan Z."/>
            <person name="Wen Y."/>
            <person name="Yao Z."/>
            <person name="Shen Y."/>
            <person name="Qiang B."/>
            <person name="Hou Y."/>
            <person name="Yu J."/>
            <person name="Jin Q."/>
        </authorList>
    </citation>
    <scope>NUCLEOTIDE SEQUENCE [LARGE SCALE GENOMIC DNA]</scope>
    <source>
        <strain>Sb227</strain>
    </source>
</reference>
<accession>Q320Y7</accession>
<evidence type="ECO:0000255" key="1">
    <source>
        <dbReference type="HAMAP-Rule" id="MF_00462"/>
    </source>
</evidence>
<dbReference type="EC" id="7.-.-.-" evidence="1"/>
<dbReference type="EMBL" id="CP000036">
    <property type="protein sequence ID" value="ABB66121.1"/>
    <property type="molecule type" value="Genomic_DNA"/>
</dbReference>
<dbReference type="RefSeq" id="WP_000231954.1">
    <property type="nucleotide sequence ID" value="NC_007613.1"/>
</dbReference>
<dbReference type="SMR" id="Q320Y7"/>
<dbReference type="KEGG" id="sbo:SBO_1504"/>
<dbReference type="HOGENOM" id="CLU_042020_0_0_6"/>
<dbReference type="Proteomes" id="UP000007067">
    <property type="component" value="Chromosome"/>
</dbReference>
<dbReference type="GO" id="GO:0005886">
    <property type="term" value="C:plasma membrane"/>
    <property type="evidence" value="ECO:0007669"/>
    <property type="project" value="UniProtKB-SubCell"/>
</dbReference>
<dbReference type="GO" id="GO:0022900">
    <property type="term" value="P:electron transport chain"/>
    <property type="evidence" value="ECO:0007669"/>
    <property type="project" value="UniProtKB-UniRule"/>
</dbReference>
<dbReference type="GO" id="GO:0055085">
    <property type="term" value="P:transmembrane transport"/>
    <property type="evidence" value="ECO:0007669"/>
    <property type="project" value="InterPro"/>
</dbReference>
<dbReference type="HAMAP" id="MF_00462">
    <property type="entry name" value="RsxD_RnfD"/>
    <property type="match status" value="1"/>
</dbReference>
<dbReference type="InterPro" id="IPR004338">
    <property type="entry name" value="NqrB/RnfD"/>
</dbReference>
<dbReference type="InterPro" id="IPR011303">
    <property type="entry name" value="RnfD_bac"/>
</dbReference>
<dbReference type="NCBIfam" id="NF002011">
    <property type="entry name" value="PRK00816.1"/>
    <property type="match status" value="1"/>
</dbReference>
<dbReference type="NCBIfam" id="TIGR01946">
    <property type="entry name" value="rnfD"/>
    <property type="match status" value="1"/>
</dbReference>
<dbReference type="PANTHER" id="PTHR30578">
    <property type="entry name" value="ELECTRON TRANSPORT COMPLEX PROTEIN RNFD"/>
    <property type="match status" value="1"/>
</dbReference>
<dbReference type="PANTHER" id="PTHR30578:SF0">
    <property type="entry name" value="ION-TRANSLOCATING OXIDOREDUCTASE COMPLEX SUBUNIT D"/>
    <property type="match status" value="1"/>
</dbReference>
<dbReference type="Pfam" id="PF03116">
    <property type="entry name" value="NQR2_RnfD_RnfE"/>
    <property type="match status" value="1"/>
</dbReference>
<sequence length="352" mass="38149">MVFRIASSPYTHNQRQTSRIMLLVLLAAVPGIAAQLWFFGWGTLVQILLASVSTLLAEALVLKLRKQSVAATLKDNSALLTGLLLAVSIPPLAPWWMVVLGTVFAVIIAKQLYGGLGQNPFNPAMIGYVVLLISFPVQMTSWLPPHEIAVNIPGFIDAIQVIFSGHTASGADMNTLHLGIDGISQATPLDTFKTSVRAGHSVEQIMQYPIYSGILAGAGWQWVNLAWLAGGLWLLWQKAIRWHIPLSFLVTLALCATLGWLFSPETLAAPQIHLLSGATMLGAFFILTDPVTASTTNRGRLIFGALAGLLVWLIRSFGGYPDGVAFAVLLANITVPLIDYYTRPRVYGHRKG</sequence>
<feature type="chain" id="PRO_0000298238" description="Ion-translocating oxidoreductase complex subunit D">
    <location>
        <begin position="1"/>
        <end position="352"/>
    </location>
</feature>
<feature type="transmembrane region" description="Helical" evidence="1">
    <location>
        <begin position="20"/>
        <end position="40"/>
    </location>
</feature>
<feature type="transmembrane region" description="Helical" evidence="1">
    <location>
        <begin position="42"/>
        <end position="62"/>
    </location>
</feature>
<feature type="transmembrane region" description="Helical" evidence="1">
    <location>
        <begin position="89"/>
        <end position="109"/>
    </location>
</feature>
<feature type="transmembrane region" description="Helical" evidence="1">
    <location>
        <begin position="123"/>
        <end position="143"/>
    </location>
</feature>
<feature type="transmembrane region" description="Helical" evidence="1">
    <location>
        <begin position="214"/>
        <end position="234"/>
    </location>
</feature>
<feature type="transmembrane region" description="Helical" evidence="1">
    <location>
        <begin position="242"/>
        <end position="262"/>
    </location>
</feature>
<feature type="transmembrane region" description="Helical" evidence="1">
    <location>
        <begin position="267"/>
        <end position="287"/>
    </location>
</feature>
<feature type="transmembrane region" description="Helical" evidence="1">
    <location>
        <begin position="301"/>
        <end position="321"/>
    </location>
</feature>
<feature type="transmembrane region" description="Helical" evidence="1">
    <location>
        <begin position="322"/>
        <end position="342"/>
    </location>
</feature>
<feature type="modified residue" description="FMN phosphoryl threonine" evidence="1">
    <location>
        <position position="187"/>
    </location>
</feature>
<keyword id="KW-0997">Cell inner membrane</keyword>
<keyword id="KW-1003">Cell membrane</keyword>
<keyword id="KW-0249">Electron transport</keyword>
<keyword id="KW-0285">Flavoprotein</keyword>
<keyword id="KW-0288">FMN</keyword>
<keyword id="KW-0472">Membrane</keyword>
<keyword id="KW-0597">Phosphoprotein</keyword>
<keyword id="KW-1278">Translocase</keyword>
<keyword id="KW-0812">Transmembrane</keyword>
<keyword id="KW-1133">Transmembrane helix</keyword>
<keyword id="KW-0813">Transport</keyword>
<protein>
    <recommendedName>
        <fullName evidence="1">Ion-translocating oxidoreductase complex subunit D</fullName>
        <ecNumber evidence="1">7.-.-.-</ecNumber>
    </recommendedName>
    <alternativeName>
        <fullName evidence="1">Rsx electron transport complex subunit D</fullName>
    </alternativeName>
</protein>
<gene>
    <name evidence="1" type="primary">rsxD</name>
    <name type="ordered locus">SBO_1504</name>
</gene>
<comment type="function">
    <text evidence="1">Part of a membrane-bound complex that couples electron transfer with translocation of ions across the membrane. Required to maintain the reduced state of SoxR.</text>
</comment>
<comment type="cofactor">
    <cofactor evidence="1">
        <name>FMN</name>
        <dbReference type="ChEBI" id="CHEBI:58210"/>
    </cofactor>
</comment>
<comment type="subunit">
    <text evidence="1">The complex is composed of six subunits: RsxA, RsxB, RsxC, RsxD, RsxE and RsxG.</text>
</comment>
<comment type="subcellular location">
    <subcellularLocation>
        <location evidence="1">Cell inner membrane</location>
        <topology evidence="1">Multi-pass membrane protein</topology>
    </subcellularLocation>
</comment>
<comment type="similarity">
    <text evidence="1">Belongs to the NqrB/RnfD family.</text>
</comment>